<proteinExistence type="evidence at protein level"/>
<feature type="initiator methionine" description="Removed" evidence="1">
    <location>
        <position position="1"/>
    </location>
</feature>
<feature type="chain" id="PRO_0000057802" description="Gap junction alpha-1 protein">
    <location>
        <begin position="2"/>
        <end position="382"/>
    </location>
</feature>
<feature type="topological domain" description="Cytoplasmic" evidence="1">
    <location>
        <begin position="2"/>
        <end position="23"/>
    </location>
</feature>
<feature type="transmembrane region" description="Helical" evidence="4">
    <location>
        <begin position="24"/>
        <end position="44"/>
    </location>
</feature>
<feature type="topological domain" description="Extracellular" evidence="1">
    <location>
        <begin position="45"/>
        <end position="76"/>
    </location>
</feature>
<feature type="transmembrane region" description="Helical" evidence="4">
    <location>
        <begin position="77"/>
        <end position="97"/>
    </location>
</feature>
<feature type="topological domain" description="Cytoplasmic" evidence="1">
    <location>
        <begin position="98"/>
        <end position="155"/>
    </location>
</feature>
<feature type="transmembrane region" description="Helical" evidence="4">
    <location>
        <begin position="156"/>
        <end position="176"/>
    </location>
</feature>
<feature type="topological domain" description="Extracellular" evidence="1">
    <location>
        <begin position="177"/>
        <end position="207"/>
    </location>
</feature>
<feature type="transmembrane region" description="Helical" evidence="4">
    <location>
        <begin position="208"/>
        <end position="228"/>
    </location>
</feature>
<feature type="topological domain" description="Cytoplasmic" evidence="1">
    <location>
        <begin position="229"/>
        <end position="382"/>
    </location>
</feature>
<feature type="region of interest" description="Interaction with NOV" evidence="1">
    <location>
        <begin position="244"/>
        <end position="382"/>
    </location>
</feature>
<feature type="region of interest" description="Interaction with UBQLN4" evidence="10">
    <location>
        <begin position="264"/>
        <end position="382"/>
    </location>
</feature>
<feature type="region of interest" description="Disordered" evidence="5">
    <location>
        <begin position="317"/>
        <end position="382"/>
    </location>
</feature>
<feature type="compositionally biased region" description="Polar residues" evidence="5">
    <location>
        <begin position="317"/>
        <end position="332"/>
    </location>
</feature>
<feature type="compositionally biased region" description="Low complexity" evidence="5">
    <location>
        <begin position="362"/>
        <end position="374"/>
    </location>
</feature>
<feature type="modified residue" description="Phosphoserine" evidence="1">
    <location>
        <position position="5"/>
    </location>
</feature>
<feature type="modified residue" description="Phosphotyrosine" evidence="20">
    <location>
        <position position="247"/>
    </location>
</feature>
<feature type="modified residue" description="Phosphoserine" evidence="2">
    <location>
        <position position="255"/>
    </location>
</feature>
<feature type="modified residue" description="Phosphoserine" evidence="1">
    <location>
        <position position="257"/>
    </location>
</feature>
<feature type="modified residue" description="Phosphoserine" evidence="2">
    <location>
        <position position="262"/>
    </location>
</feature>
<feature type="modified residue" description="S-nitrosocysteine" evidence="13">
    <location>
        <position position="271"/>
    </location>
</feature>
<feature type="modified residue" description="Phosphothreonine" evidence="21">
    <location>
        <position position="275"/>
    </location>
</feature>
<feature type="modified residue" description="Phosphoserine" evidence="21">
    <location>
        <position position="306"/>
    </location>
</feature>
<feature type="modified residue" description="Phosphoserine" evidence="21">
    <location>
        <position position="314"/>
    </location>
</feature>
<feature type="modified residue" description="Phosphoserine" evidence="21">
    <location>
        <position position="325"/>
    </location>
</feature>
<feature type="modified residue" description="Phosphothreonine" evidence="21">
    <location>
        <position position="326"/>
    </location>
</feature>
<feature type="modified residue" description="Phosphoserine" evidence="21">
    <location>
        <position position="328"/>
    </location>
</feature>
<feature type="modified residue" description="Phosphoserine" evidence="21">
    <location>
        <position position="330"/>
    </location>
</feature>
<feature type="modified residue" description="Phosphoserine" evidence="21">
    <location>
        <position position="341"/>
    </location>
</feature>
<feature type="modified residue" description="Phosphoserine" evidence="21">
    <location>
        <position position="365"/>
    </location>
</feature>
<feature type="modified residue" description="Phosphoserine; by PKC/PRKCG and PKC/PRKCD" evidence="16 21">
    <location>
        <position position="368"/>
    </location>
</feature>
<feature type="modified residue" description="Phosphoserine" evidence="21">
    <location>
        <position position="369"/>
    </location>
</feature>
<feature type="modified residue" description="Phosphoserine" evidence="1">
    <location>
        <position position="373"/>
    </location>
</feature>
<feature type="disulfide bond" evidence="2">
    <location>
        <begin position="54"/>
        <end position="192"/>
    </location>
</feature>
<feature type="disulfide bond" evidence="2">
    <location>
        <begin position="187"/>
        <end position="198"/>
    </location>
</feature>
<feature type="cross-link" description="Glycyl lysine isopeptide (Lys-Gly) (interchain with G-Cter in SUMO)" evidence="2">
    <location>
        <position position="144"/>
    </location>
</feature>
<feature type="cross-link" description="Glycyl lysine isopeptide (Lys-Gly) (interchain with G-Cter in SUMO)" evidence="2">
    <location>
        <position position="237"/>
    </location>
</feature>
<feature type="sequence conflict" description="In Ref. 5; BAC26375." evidence="19" ref="5">
    <original>G</original>
    <variation>V</variation>
    <location>
        <position position="21"/>
    </location>
</feature>
<feature type="sequence conflict" description="In Ref. 3; AAA53027." evidence="19" ref="3">
    <original>M</original>
    <variation>T</variation>
    <location>
        <position position="320"/>
    </location>
</feature>
<sequence>MGDWSALGKLLDKVQAYSTAGGKVWLSVLFIFRILLLGTAVESAWGDEQSAFRCNTQQPGCENVCYDKSFPISHVRFWVLQIIFVSVPTLLYLAHVFYVMRKEEKLNKKEEELKVAQTDGVNVEMHLKQIEIKKFKYGIEEHGKVKMRGGLLRTYIISILFKSVFEVAFLLIQWYIYGFSLSAVYTCKRDPCPHQVDCFLSRPTEKTIFIIFMLVVSLVSLALNIIELFYVFFKGVKDRVKGRSDPYHATTGPLSPSKDCGSPKYAYFNGCSSPTAPLSPMSPPGYKLVTGDRNNSSCRNYNKQASEQNWANYSAEQNRMGQAGSTISNSHAQPFDFPDDSQNAKKVAAGHELQPLAIVDQRPSSRASSRASSRPRPDDLEI</sequence>
<protein>
    <recommendedName>
        <fullName>Gap junction alpha-1 protein</fullName>
    </recommendedName>
    <alternativeName>
        <fullName>Connexin-43</fullName>
        <shortName>Cx43</shortName>
    </alternativeName>
    <alternativeName>
        <fullName>Gap junction 43 kDa heart protein</fullName>
    </alternativeName>
</protein>
<comment type="function">
    <text evidence="7 15 16">Gap junction protein that acts as a regulator of bladder capacity. A gap junction consists of a cluster of closely packed pairs of transmembrane channels, the connexons, through which materials of low MW diffuse from one cell to a neighboring cell. Negative regulator of bladder functional capacity: acts by enhancing intercellular electrical and chemical transmission, thus sensitizing bladder muscles to cholinergic neural stimuli and causing them to contract. May play a role in cell growth inhibition through the regulation of NOV expression and localization (PubMed:15181016). Plays an essential role in gap junction communication in the ventricles (PubMed:26403541).</text>
</comment>
<comment type="function">
    <text evidence="15">Connexin 43 is possibly the ATP-induced pore of mouse macrophages.</text>
</comment>
<comment type="subunit">
    <text evidence="1 2 9 10 11 12 16">A connexon is composed of a hexamer of connexins. Interacts with CSNK1D (By similarity). Interacts with RIC1/CIP150 (By similarity). Interacts (via C-terminus) with TJP1 (By similarity). Interacts (via C-terminus) with SRC (via SH3 domain) (By similarity). Interacts (not ubiquitinated) with UBQLN4 (via UBA domain). Interacts with CNST. Interacts with SGSM3. Interacts with NOV (By similarity). Interacts with TMEM65 (PubMed:26403541). Interacts with ANK3/ANKG and PKP2 (By similarity).</text>
</comment>
<comment type="interaction">
    <interactant intactId="EBI-298630">
        <id>P23242</id>
    </interactant>
    <interactant intactId="EBI-3506699">
        <id>Q8CDJ3</id>
        <label>Atg14</label>
    </interactant>
    <organismsDiffer>false</organismsDiffer>
    <experiments>2</experiments>
</comment>
<comment type="interaction">
    <interactant intactId="EBI-298630">
        <id>P23242</id>
    </interactant>
    <interactant intactId="EBI-769195">
        <id>Q8C0J2</id>
        <label>Atg16l1</label>
    </interactant>
    <organismsDiffer>false</organismsDiffer>
    <experiments>2</experiments>
</comment>
<comment type="interaction">
    <interactant intactId="EBI-298630">
        <id>P23242</id>
    </interactant>
    <interactant intactId="EBI-8418161">
        <id>Q7TT37</id>
        <label>Elp1</label>
    </interactant>
    <organismsDiffer>false</organismsDiffer>
    <experiments>3</experiments>
</comment>
<comment type="interaction">
    <interactant intactId="EBI-298630">
        <id>P23242</id>
    </interactant>
    <interactant intactId="EBI-1767245">
        <id>P28231</id>
        <label>Gjb3</label>
    </interactant>
    <organismsDiffer>false</organismsDiffer>
    <experiments>2</experiments>
</comment>
<comment type="interaction">
    <interactant intactId="EBI-298630">
        <id>P23242</id>
    </interactant>
    <interactant intactId="EBI-1767271">
        <id>P28229</id>
        <label>Gjc1</label>
    </interactant>
    <organismsDiffer>false</organismsDiffer>
    <experiments>2</experiments>
</comment>
<comment type="interaction">
    <interactant intactId="EBI-298630">
        <id>P23242</id>
    </interactant>
    <interactant intactId="EBI-646397">
        <id>Q6NZM9</id>
        <label>Hdac4</label>
    </interactant>
    <organismsDiffer>false</organismsDiffer>
    <experiments>2</experiments>
</comment>
<comment type="interaction">
    <interactant intactId="EBI-298630">
        <id>P23242</id>
    </interactant>
    <interactant intactId="EBI-645339">
        <id>Q9Z2V6</id>
        <label>Hdac5</label>
    </interactant>
    <organismsDiffer>false</organismsDiffer>
    <experiments>2</experiments>
</comment>
<comment type="interaction">
    <interactant intactId="EBI-298630">
        <id>P23242</id>
    </interactant>
    <interactant intactId="EBI-6678149">
        <id>Q6PF93</id>
        <label>Pik3c3</label>
    </interactant>
    <organismsDiffer>false</organismsDiffer>
    <experiments>4</experiments>
</comment>
<comment type="interaction">
    <interactant intactId="EBI-298630">
        <id>P23242</id>
    </interactant>
    <interactant intactId="EBI-6678184">
        <id>Q8VD65</id>
        <label>Pik3r4</label>
    </interactant>
    <organismsDiffer>false</organismsDiffer>
    <experiments>3</experiments>
</comment>
<comment type="interaction">
    <interactant intactId="EBI-298630">
        <id>P23242</id>
    </interactant>
    <interactant intactId="EBI-1551324">
        <id>P28867</id>
        <label>Prkcd</label>
    </interactant>
    <organismsDiffer>false</organismsDiffer>
    <experiments>4</experiments>
</comment>
<comment type="interaction">
    <interactant intactId="EBI-298630">
        <id>P23242</id>
    </interactant>
    <interactant intactId="EBI-298451">
        <id>P16054</id>
        <label>Prkce</label>
    </interactant>
    <organismsDiffer>false</organismsDiffer>
    <experiments>3</experiments>
</comment>
<comment type="interaction">
    <interactant intactId="EBI-298630">
        <id>P23242</id>
    </interactant>
    <interactant intactId="EBI-298680">
        <id>P05480</id>
        <label>Src</label>
    </interactant>
    <organismsDiffer>false</organismsDiffer>
    <experiments>3</experiments>
</comment>
<comment type="interaction">
    <interactant intactId="EBI-298630">
        <id>P23242</id>
    </interactant>
    <interactant intactId="EBI-79508">
        <id>P39447</id>
        <label>Tjp1</label>
    </interactant>
    <organismsDiffer>false</organismsDiffer>
    <experiments>4</experiments>
</comment>
<comment type="interaction">
    <interactant intactId="EBI-298630">
        <id>P23242</id>
    </interactant>
    <interactant intactId="EBI-400675">
        <id>P68254</id>
        <label>Ywhaq</label>
    </interactant>
    <organismsDiffer>false</organismsDiffer>
    <experiments>3</experiments>
</comment>
<comment type="interaction">
    <interactant intactId="EBI-298630">
        <id>P23242</id>
    </interactant>
    <interactant intactId="EBI-6991142">
        <id>Q63664</id>
        <label>Kcnj8</label>
    </interactant>
    <organismsDiffer>true</organismsDiffer>
    <experiments>4</experiments>
</comment>
<comment type="subcellular location">
    <subcellularLocation>
        <location evidence="16 17">Cell membrane</location>
        <topology evidence="4">Multi-pass membrane protein</topology>
    </subcellularLocation>
    <subcellularLocation>
        <location evidence="2">Cell junction</location>
        <location evidence="2">Gap junction</location>
    </subcellularLocation>
    <subcellularLocation>
        <location evidence="10 12">Endoplasmic reticulum</location>
    </subcellularLocation>
    <text evidence="16">Localizes at the intercalated disk (ICD) in cardiomyocytes and proper localization at ICD is dependent on TMEM65.</text>
</comment>
<comment type="tissue specificity">
    <text evidence="6 8 14 15">Expressed in heart, non-sensory epithelial cells, and in fibrocytes of the spiral ligament and the spiral limbus. Expressed in bladder smooth muscle cells (at protein level). Expressed in astrocytes (at protein level) (PubMed:15213231).</text>
</comment>
<comment type="developmental stage">
    <text evidence="18">At 7.5 dpc, expressed in the embryo, but not in the extraembryonic region containing the ectoplacental cone.</text>
</comment>
<comment type="induction">
    <text evidence="15">In bladder smooth muscle cells, exhibits night/day variations with low levels during the sleep phase, at circadian time (CT) 4-12 (at protein level). Down-regulation during the night allows increase in bladder capacity, avoiding disturbance of sleep by micturition. Expression starts to increase around CT12 and forms a plateau during the active phase (CT16-24) (at protein level). Circadian transcription is activated by NR1D1. Up-regulated by SP1 and SP3.</text>
</comment>
<comment type="PTM">
    <text evidence="1 2 3">Phosphorylation at Ser-325, Ser-328 and Ser-330 by CK1 modulates gap junction assembly. Phosphorylated at Ser-368 by PRKCG; phosphorylation induces disassembly of gap junction plaques and inhibition of gap junction activity. Phosphorylation at Ser-368 by PRKCD triggers its internalization into small vesicles leading to proteasome-mediated degradation (By similarity).</text>
</comment>
<comment type="PTM">
    <text evidence="2">Sumoylated with SUMO1, SUMO2 and SUMO3, which may regulate the level of functional Cx43 gap junctions at the plasma membrane. May be desumoylated by SENP1 or SENP2 (By similarity).</text>
</comment>
<comment type="PTM">
    <text evidence="17">Acetylated in the developing cortex; leading to delocalization from the cell membrane.</text>
</comment>
<comment type="PTM">
    <text evidence="13">S-nitrosylation at Cys-271 is enriched at the muscle endothelial gap junction in arteries, it augments channel permeability and may regulate of smooth muscle cell to endothelial cell communication.</text>
</comment>
<comment type="disruption phenotype">
    <text evidence="15">Mutant mice die shortly after birth.</text>
</comment>
<comment type="similarity">
    <text evidence="19">Belongs to the connexin family. Alpha-type (group II) subfamily.</text>
</comment>
<gene>
    <name type="primary">Gja1</name>
    <name type="synonym">Cxn-43</name>
</gene>
<name>CXA1_MOUSE</name>
<dbReference type="EMBL" id="M61896">
    <property type="protein sequence ID" value="AAA37444.1"/>
    <property type="molecule type" value="Genomic_DNA"/>
</dbReference>
<dbReference type="EMBL" id="M63801">
    <property type="protein sequence ID" value="AAA53027.1"/>
    <property type="molecule type" value="mRNA"/>
</dbReference>
<dbReference type="EMBL" id="X62836">
    <property type="protein sequence ID" value="CAA44640.1"/>
    <property type="molecule type" value="Genomic_DNA"/>
</dbReference>
<dbReference type="EMBL" id="X61576">
    <property type="protein sequence ID" value="CAA43778.1"/>
    <property type="molecule type" value="mRNA"/>
</dbReference>
<dbReference type="EMBL" id="AK029291">
    <property type="protein sequence ID" value="BAC26375.1"/>
    <property type="molecule type" value="mRNA"/>
</dbReference>
<dbReference type="EMBL" id="AK036979">
    <property type="protein sequence ID" value="BAC29656.1"/>
    <property type="molecule type" value="mRNA"/>
</dbReference>
<dbReference type="EMBL" id="AK145692">
    <property type="protein sequence ID" value="BAE26592.1"/>
    <property type="molecule type" value="mRNA"/>
</dbReference>
<dbReference type="EMBL" id="AK165986">
    <property type="protein sequence ID" value="BAE38502.1"/>
    <property type="molecule type" value="mRNA"/>
</dbReference>
<dbReference type="EMBL" id="CT010327">
    <property type="protein sequence ID" value="CAJ18535.1"/>
    <property type="molecule type" value="mRNA"/>
</dbReference>
<dbReference type="EMBL" id="CH466540">
    <property type="protein sequence ID" value="EDL05108.1"/>
    <property type="molecule type" value="Genomic_DNA"/>
</dbReference>
<dbReference type="EMBL" id="BC006894">
    <property type="protein sequence ID" value="AAH06894.1"/>
    <property type="molecule type" value="mRNA"/>
</dbReference>
<dbReference type="CCDS" id="CCDS23851.1"/>
<dbReference type="PIR" id="A39802">
    <property type="entry name" value="A39802"/>
</dbReference>
<dbReference type="RefSeq" id="NP_001415427.1">
    <property type="nucleotide sequence ID" value="NM_001428498.1"/>
</dbReference>
<dbReference type="RefSeq" id="NP_001415428.1">
    <property type="nucleotide sequence ID" value="NM_001428499.1"/>
</dbReference>
<dbReference type="RefSeq" id="NP_001415429.1">
    <property type="nucleotide sequence ID" value="NM_001428500.1"/>
</dbReference>
<dbReference type="RefSeq" id="NP_001415430.1">
    <property type="nucleotide sequence ID" value="NM_001428501.1"/>
</dbReference>
<dbReference type="RefSeq" id="NP_034418.1">
    <property type="nucleotide sequence ID" value="NM_010288.4"/>
</dbReference>
<dbReference type="BMRB" id="P23242"/>
<dbReference type="SMR" id="P23242"/>
<dbReference type="BioGRID" id="199923">
    <property type="interactions" value="27"/>
</dbReference>
<dbReference type="CORUM" id="P23242"/>
<dbReference type="DIP" id="DIP-29207N"/>
<dbReference type="FunCoup" id="P23242">
    <property type="interactions" value="353"/>
</dbReference>
<dbReference type="IntAct" id="P23242">
    <property type="interactions" value="32"/>
</dbReference>
<dbReference type="MINT" id="P23242"/>
<dbReference type="STRING" id="10090.ENSMUSP00000151620"/>
<dbReference type="GlyGen" id="P23242">
    <property type="glycosylation" value="2 sites, 1 N-linked glycan (1 site), 1 O-linked glycan (1 site)"/>
</dbReference>
<dbReference type="iPTMnet" id="P23242"/>
<dbReference type="PhosphoSitePlus" id="P23242"/>
<dbReference type="SwissPalm" id="P23242"/>
<dbReference type="jPOST" id="P23242"/>
<dbReference type="PaxDb" id="10090-ENSMUSP00000064536"/>
<dbReference type="PeptideAtlas" id="P23242"/>
<dbReference type="ProteomicsDB" id="285405"/>
<dbReference type="Pumba" id="P23242"/>
<dbReference type="ABCD" id="P23242">
    <property type="antibodies" value="7 sequenced antibodies"/>
</dbReference>
<dbReference type="DNASU" id="14609"/>
<dbReference type="Ensembl" id="ENSMUST00000068581.9">
    <property type="protein sequence ID" value="ENSMUSP00000064536.8"/>
    <property type="gene ID" value="ENSMUSG00000050953.11"/>
</dbReference>
<dbReference type="Ensembl" id="ENSMUST00000220069.2">
    <property type="protein sequence ID" value="ENSMUSP00000151620.2"/>
    <property type="gene ID" value="ENSMUSG00000050953.11"/>
</dbReference>
<dbReference type="GeneID" id="14609"/>
<dbReference type="KEGG" id="mmu:14609"/>
<dbReference type="UCSC" id="uc007fcc.2">
    <property type="organism name" value="mouse"/>
</dbReference>
<dbReference type="AGR" id="MGI:95713"/>
<dbReference type="CTD" id="2697"/>
<dbReference type="MGI" id="MGI:95713">
    <property type="gene designation" value="Gja1"/>
</dbReference>
<dbReference type="VEuPathDB" id="HostDB:ENSMUSG00000050953"/>
<dbReference type="eggNOG" id="ENOG502QRAE">
    <property type="taxonomic scope" value="Eukaryota"/>
</dbReference>
<dbReference type="GeneTree" id="ENSGT01090000260070"/>
<dbReference type="HOGENOM" id="CLU_037388_0_0_1"/>
<dbReference type="InParanoid" id="P23242"/>
<dbReference type="OMA" id="FWVLQFI"/>
<dbReference type="OrthoDB" id="8773830at2759"/>
<dbReference type="PhylomeDB" id="P23242"/>
<dbReference type="TreeFam" id="TF329606"/>
<dbReference type="Reactome" id="R-MMU-190840">
    <property type="pathway name" value="Microtubule-dependent trafficking of connexons from Golgi to the plasma membrane"/>
</dbReference>
<dbReference type="Reactome" id="R-MMU-190861">
    <property type="pathway name" value="Gap junction assembly"/>
</dbReference>
<dbReference type="Reactome" id="R-MMU-190873">
    <property type="pathway name" value="Gap junction degradation"/>
</dbReference>
<dbReference type="Reactome" id="R-MMU-191650">
    <property type="pathway name" value="Regulation of gap junction activity"/>
</dbReference>
<dbReference type="Reactome" id="R-MMU-196025">
    <property type="pathway name" value="Formation of annular gap junctions"/>
</dbReference>
<dbReference type="Reactome" id="R-MMU-9013406">
    <property type="pathway name" value="RHOQ GTPase cycle"/>
</dbReference>
<dbReference type="BioGRID-ORCS" id="14609">
    <property type="hits" value="4 hits in 80 CRISPR screens"/>
</dbReference>
<dbReference type="CD-CODE" id="CE726F99">
    <property type="entry name" value="Postsynaptic density"/>
</dbReference>
<dbReference type="ChiTaRS" id="Gja1">
    <property type="organism name" value="mouse"/>
</dbReference>
<dbReference type="PRO" id="PR:P23242"/>
<dbReference type="Proteomes" id="UP000000589">
    <property type="component" value="Chromosome 10"/>
</dbReference>
<dbReference type="RNAct" id="P23242">
    <property type="molecule type" value="protein"/>
</dbReference>
<dbReference type="Bgee" id="ENSMUSG00000050953">
    <property type="expression patterns" value="Expressed in ciliary body and 348 other cell types or tissues"/>
</dbReference>
<dbReference type="ExpressionAtlas" id="P23242">
    <property type="expression patterns" value="baseline and differential"/>
</dbReference>
<dbReference type="GO" id="GO:0016324">
    <property type="term" value="C:apical plasma membrane"/>
    <property type="evidence" value="ECO:0000314"/>
    <property type="project" value="UniProtKB"/>
</dbReference>
<dbReference type="GO" id="GO:0030054">
    <property type="term" value="C:cell junction"/>
    <property type="evidence" value="ECO:0000314"/>
    <property type="project" value="MGI"/>
</dbReference>
<dbReference type="GO" id="GO:0005911">
    <property type="term" value="C:cell-cell junction"/>
    <property type="evidence" value="ECO:0000314"/>
    <property type="project" value="MGI"/>
</dbReference>
<dbReference type="GO" id="GO:0005922">
    <property type="term" value="C:connexin complex"/>
    <property type="evidence" value="ECO:0000250"/>
    <property type="project" value="UniProtKB"/>
</dbReference>
<dbReference type="GO" id="GO:0043292">
    <property type="term" value="C:contractile muscle fiber"/>
    <property type="evidence" value="ECO:0000314"/>
    <property type="project" value="MGI"/>
</dbReference>
<dbReference type="GO" id="GO:0005737">
    <property type="term" value="C:cytoplasm"/>
    <property type="evidence" value="ECO:0000314"/>
    <property type="project" value="MGI"/>
</dbReference>
<dbReference type="GO" id="GO:0005829">
    <property type="term" value="C:cytosol"/>
    <property type="evidence" value="ECO:0000314"/>
    <property type="project" value="MGI"/>
</dbReference>
<dbReference type="GO" id="GO:0005783">
    <property type="term" value="C:endoplasmic reticulum"/>
    <property type="evidence" value="ECO:0007669"/>
    <property type="project" value="UniProtKB-SubCell"/>
</dbReference>
<dbReference type="GO" id="GO:0005916">
    <property type="term" value="C:fascia adherens"/>
    <property type="evidence" value="ECO:0000314"/>
    <property type="project" value="MGI"/>
</dbReference>
<dbReference type="GO" id="GO:0005921">
    <property type="term" value="C:gap junction"/>
    <property type="evidence" value="ECO:0000314"/>
    <property type="project" value="UniProtKB"/>
</dbReference>
<dbReference type="GO" id="GO:0005794">
    <property type="term" value="C:Golgi apparatus"/>
    <property type="evidence" value="ECO:0000314"/>
    <property type="project" value="MGI"/>
</dbReference>
<dbReference type="GO" id="GO:0014704">
    <property type="term" value="C:intercalated disc"/>
    <property type="evidence" value="ECO:0000314"/>
    <property type="project" value="UniProtKB"/>
</dbReference>
<dbReference type="GO" id="GO:0005882">
    <property type="term" value="C:intermediate filament"/>
    <property type="evidence" value="ECO:0000314"/>
    <property type="project" value="BHF-UCL"/>
</dbReference>
<dbReference type="GO" id="GO:0016328">
    <property type="term" value="C:lateral plasma membrane"/>
    <property type="evidence" value="ECO:0000314"/>
    <property type="project" value="MGI"/>
</dbReference>
<dbReference type="GO" id="GO:0016020">
    <property type="term" value="C:membrane"/>
    <property type="evidence" value="ECO:0000314"/>
    <property type="project" value="MGI"/>
</dbReference>
<dbReference type="GO" id="GO:0005739">
    <property type="term" value="C:mitochondrion"/>
    <property type="evidence" value="ECO:0000250"/>
    <property type="project" value="UniProtKB"/>
</dbReference>
<dbReference type="GO" id="GO:0005886">
    <property type="term" value="C:plasma membrane"/>
    <property type="evidence" value="ECO:0000314"/>
    <property type="project" value="UniProtKB"/>
</dbReference>
<dbReference type="GO" id="GO:0048487">
    <property type="term" value="F:beta-tubulin binding"/>
    <property type="evidence" value="ECO:0000314"/>
    <property type="project" value="MGI"/>
</dbReference>
<dbReference type="GO" id="GO:0015267">
    <property type="term" value="F:channel activity"/>
    <property type="evidence" value="ECO:0000304"/>
    <property type="project" value="Reactome"/>
</dbReference>
<dbReference type="GO" id="GO:0015562">
    <property type="term" value="F:efflux transmembrane transporter activity"/>
    <property type="evidence" value="ECO:0000315"/>
    <property type="project" value="ARUK-UCL"/>
</dbReference>
<dbReference type="GO" id="GO:0005243">
    <property type="term" value="F:gap junction channel activity"/>
    <property type="evidence" value="ECO:0000314"/>
    <property type="project" value="MGI"/>
</dbReference>
<dbReference type="GO" id="GO:0086075">
    <property type="term" value="F:gap junction channel activity involved in cardiac conduction electrical coupling"/>
    <property type="evidence" value="ECO:0000304"/>
    <property type="project" value="UniProtKB"/>
</dbReference>
<dbReference type="GO" id="GO:0055077">
    <property type="term" value="F:gap junction hemi-channel activity"/>
    <property type="evidence" value="ECO:0000250"/>
    <property type="project" value="UniProtKB"/>
</dbReference>
<dbReference type="GO" id="GO:0034634">
    <property type="term" value="F:glutathione transmembrane transporter activity"/>
    <property type="evidence" value="ECO:0000315"/>
    <property type="project" value="ARUK-UCL"/>
</dbReference>
<dbReference type="GO" id="GO:1990782">
    <property type="term" value="F:protein tyrosine kinase binding"/>
    <property type="evidence" value="ECO:0000353"/>
    <property type="project" value="CAFA"/>
</dbReference>
<dbReference type="GO" id="GO:0097110">
    <property type="term" value="F:scaffold protein binding"/>
    <property type="evidence" value="ECO:0000353"/>
    <property type="project" value="CAFA"/>
</dbReference>
<dbReference type="GO" id="GO:0005102">
    <property type="term" value="F:signaling receptor binding"/>
    <property type="evidence" value="ECO:0000353"/>
    <property type="project" value="MGI"/>
</dbReference>
<dbReference type="GO" id="GO:0015631">
    <property type="term" value="F:tubulin binding"/>
    <property type="evidence" value="ECO:0000250"/>
    <property type="project" value="UniProtKB"/>
</dbReference>
<dbReference type="GO" id="GO:0007512">
    <property type="term" value="P:adult heart development"/>
    <property type="evidence" value="ECO:0000315"/>
    <property type="project" value="MGI"/>
</dbReference>
<dbReference type="GO" id="GO:0003294">
    <property type="term" value="P:atrial ventricular junction remodeling"/>
    <property type="evidence" value="ECO:0000316"/>
    <property type="project" value="MGI"/>
</dbReference>
<dbReference type="GO" id="GO:0048514">
    <property type="term" value="P:blood vessel morphogenesis"/>
    <property type="evidence" value="ECO:0000315"/>
    <property type="project" value="MGI"/>
</dbReference>
<dbReference type="GO" id="GO:0060348">
    <property type="term" value="P:bone development"/>
    <property type="evidence" value="ECO:0000315"/>
    <property type="project" value="UniProtKB"/>
</dbReference>
<dbReference type="GO" id="GO:0046849">
    <property type="term" value="P:bone remodeling"/>
    <property type="evidence" value="ECO:0000315"/>
    <property type="project" value="UniProtKB"/>
</dbReference>
<dbReference type="GO" id="GO:0061337">
    <property type="term" value="P:cardiac conduction"/>
    <property type="evidence" value="ECO:0000315"/>
    <property type="project" value="MGI"/>
</dbReference>
<dbReference type="GO" id="GO:0010643">
    <property type="term" value="P:cell communication by chemical coupling"/>
    <property type="evidence" value="ECO:0000314"/>
    <property type="project" value="MGI"/>
</dbReference>
<dbReference type="GO" id="GO:0010644">
    <property type="term" value="P:cell communication by electrical coupling"/>
    <property type="evidence" value="ECO:0000314"/>
    <property type="project" value="MGI"/>
</dbReference>
<dbReference type="GO" id="GO:0045216">
    <property type="term" value="P:cell-cell junction organization"/>
    <property type="evidence" value="ECO:0000315"/>
    <property type="project" value="MGI"/>
</dbReference>
<dbReference type="GO" id="GO:0007267">
    <property type="term" value="P:cell-cell signaling"/>
    <property type="evidence" value="ECO:0000314"/>
    <property type="project" value="MGI"/>
</dbReference>
<dbReference type="GO" id="GO:1904646">
    <property type="term" value="P:cellular response to amyloid-beta"/>
    <property type="evidence" value="ECO:0000315"/>
    <property type="project" value="ARUK-UCL"/>
</dbReference>
<dbReference type="GO" id="GO:0071467">
    <property type="term" value="P:cellular response to pH"/>
    <property type="evidence" value="ECO:0000314"/>
    <property type="project" value="CAFA"/>
</dbReference>
<dbReference type="GO" id="GO:0002069">
    <property type="term" value="P:columnar/cuboidal epithelial cell maturation"/>
    <property type="evidence" value="ECO:0000315"/>
    <property type="project" value="MGI"/>
</dbReference>
<dbReference type="GO" id="GO:0042733">
    <property type="term" value="P:embryonic digit morphogenesis"/>
    <property type="evidence" value="ECO:0000315"/>
    <property type="project" value="MGI"/>
</dbReference>
<dbReference type="GO" id="GO:0035050">
    <property type="term" value="P:embryonic heart tube development"/>
    <property type="evidence" value="ECO:0000315"/>
    <property type="project" value="MGI"/>
</dbReference>
<dbReference type="GO" id="GO:0003347">
    <property type="term" value="P:epicardial cell to mesenchymal cell transition"/>
    <property type="evidence" value="ECO:0000304"/>
    <property type="project" value="DFLAT"/>
</dbReference>
<dbReference type="GO" id="GO:0090162">
    <property type="term" value="P:establishment of epithelial cell polarity"/>
    <property type="evidence" value="ECO:0000304"/>
    <property type="project" value="DFLAT"/>
</dbReference>
<dbReference type="GO" id="GO:0140115">
    <property type="term" value="P:export across plasma membrane"/>
    <property type="evidence" value="ECO:0000315"/>
    <property type="project" value="ARUK-UCL"/>
</dbReference>
<dbReference type="GO" id="GO:0014047">
    <property type="term" value="P:glutamate secretion"/>
    <property type="evidence" value="ECO:0000315"/>
    <property type="project" value="ARUK-UCL"/>
</dbReference>
<dbReference type="GO" id="GO:0007507">
    <property type="term" value="P:heart development"/>
    <property type="evidence" value="ECO:0000315"/>
    <property type="project" value="UniProtKB"/>
</dbReference>
<dbReference type="GO" id="GO:0001947">
    <property type="term" value="P:heart looping"/>
    <property type="evidence" value="ECO:0000315"/>
    <property type="project" value="MGI"/>
</dbReference>
<dbReference type="GO" id="GO:0001701">
    <property type="term" value="P:in utero embryonic development"/>
    <property type="evidence" value="ECO:0000315"/>
    <property type="project" value="MGI"/>
</dbReference>
<dbReference type="GO" id="GO:0002088">
    <property type="term" value="P:lens development in camera-type eye"/>
    <property type="evidence" value="ECO:0000315"/>
    <property type="project" value="MGI"/>
</dbReference>
<dbReference type="GO" id="GO:0008584">
    <property type="term" value="P:male gonad development"/>
    <property type="evidence" value="ECO:0000315"/>
    <property type="project" value="UniProtKB"/>
</dbReference>
<dbReference type="GO" id="GO:0099111">
    <property type="term" value="P:microtubule-based transport"/>
    <property type="evidence" value="ECO:0000250"/>
    <property type="project" value="UniProtKB"/>
</dbReference>
<dbReference type="GO" id="GO:0060156">
    <property type="term" value="P:milk ejection reflex"/>
    <property type="evidence" value="ECO:0000315"/>
    <property type="project" value="MGI"/>
</dbReference>
<dbReference type="GO" id="GO:0030308">
    <property type="term" value="P:negative regulation of cell growth"/>
    <property type="evidence" value="ECO:0000315"/>
    <property type="project" value="UniProtKB"/>
</dbReference>
<dbReference type="GO" id="GO:0010629">
    <property type="term" value="P:negative regulation of gene expression"/>
    <property type="evidence" value="ECO:0000315"/>
    <property type="project" value="MGI"/>
</dbReference>
<dbReference type="GO" id="GO:0097402">
    <property type="term" value="P:neuroblast migration"/>
    <property type="evidence" value="ECO:0000315"/>
    <property type="project" value="MGI"/>
</dbReference>
<dbReference type="GO" id="GO:0001764">
    <property type="term" value="P:neuron migration"/>
    <property type="evidence" value="ECO:0000315"/>
    <property type="project" value="MGI"/>
</dbReference>
<dbReference type="GO" id="GO:0001649">
    <property type="term" value="P:osteoblast differentiation"/>
    <property type="evidence" value="ECO:0000315"/>
    <property type="project" value="MGI"/>
</dbReference>
<dbReference type="GO" id="GO:0120162">
    <property type="term" value="P:positive regulation of cold-induced thermogenesis"/>
    <property type="evidence" value="ECO:0000315"/>
    <property type="project" value="YuBioLab"/>
</dbReference>
<dbReference type="GO" id="GO:0010628">
    <property type="term" value="P:positive regulation of gene expression"/>
    <property type="evidence" value="ECO:0000315"/>
    <property type="project" value="MGI"/>
</dbReference>
<dbReference type="GO" id="GO:0045844">
    <property type="term" value="P:positive regulation of striated muscle tissue development"/>
    <property type="evidence" value="ECO:0000315"/>
    <property type="project" value="MGI"/>
</dbReference>
<dbReference type="GO" id="GO:0042981">
    <property type="term" value="P:regulation of apoptotic process"/>
    <property type="evidence" value="ECO:0000250"/>
    <property type="project" value="UniProtKB"/>
</dbReference>
<dbReference type="GO" id="GO:0060371">
    <property type="term" value="P:regulation of atrial cardiac muscle cell membrane depolarization"/>
    <property type="evidence" value="ECO:0000315"/>
    <property type="project" value="MGI"/>
</dbReference>
<dbReference type="GO" id="GO:0060312">
    <property type="term" value="P:regulation of blood vessel remodeling"/>
    <property type="evidence" value="ECO:0000304"/>
    <property type="project" value="DFLAT"/>
</dbReference>
<dbReference type="GO" id="GO:0030500">
    <property type="term" value="P:regulation of bone mineralization"/>
    <property type="evidence" value="ECO:0000315"/>
    <property type="project" value="MGI"/>
</dbReference>
<dbReference type="GO" id="GO:0046850">
    <property type="term" value="P:regulation of bone remodeling"/>
    <property type="evidence" value="ECO:0000315"/>
    <property type="project" value="MGI"/>
</dbReference>
<dbReference type="GO" id="GO:0008016">
    <property type="term" value="P:regulation of heart contraction"/>
    <property type="evidence" value="ECO:0000315"/>
    <property type="project" value="MGI"/>
</dbReference>
<dbReference type="GO" id="GO:0060373">
    <property type="term" value="P:regulation of ventricular cardiac muscle cell membrane depolarization"/>
    <property type="evidence" value="ECO:0000315"/>
    <property type="project" value="MGI"/>
</dbReference>
<dbReference type="GO" id="GO:0060307">
    <property type="term" value="P:regulation of ventricular cardiac muscle cell membrane repolarization"/>
    <property type="evidence" value="ECO:0000315"/>
    <property type="project" value="MGI"/>
</dbReference>
<dbReference type="GO" id="GO:0043403">
    <property type="term" value="P:skeletal muscle tissue regeneration"/>
    <property type="evidence" value="ECO:0000314"/>
    <property type="project" value="MGI"/>
</dbReference>
<dbReference type="GO" id="GO:0007283">
    <property type="term" value="P:spermatogenesis"/>
    <property type="evidence" value="ECO:0000315"/>
    <property type="project" value="UniProtKB"/>
</dbReference>
<dbReference type="GO" id="GO:0042110">
    <property type="term" value="P:T cell activation"/>
    <property type="evidence" value="ECO:0000314"/>
    <property type="project" value="UniProtKB"/>
</dbReference>
<dbReference type="GO" id="GO:0042098">
    <property type="term" value="P:T cell proliferation"/>
    <property type="evidence" value="ECO:0000315"/>
    <property type="project" value="UniProtKB"/>
</dbReference>
<dbReference type="GO" id="GO:0042908">
    <property type="term" value="P:xenobiotic transport"/>
    <property type="evidence" value="ECO:0000315"/>
    <property type="project" value="ARUK-UCL"/>
</dbReference>
<dbReference type="FunFam" id="1.20.1440.80:FF:000001">
    <property type="entry name" value="Gap junction alpha-1"/>
    <property type="match status" value="1"/>
</dbReference>
<dbReference type="FunFam" id="1.20.5.1130:FF:000001">
    <property type="entry name" value="Gap junction alpha-1"/>
    <property type="match status" value="1"/>
</dbReference>
<dbReference type="Gene3D" id="1.20.5.1130">
    <property type="entry name" value="Connexin43"/>
    <property type="match status" value="1"/>
</dbReference>
<dbReference type="Gene3D" id="1.20.1440.80">
    <property type="entry name" value="Gap junction channel protein cysteine-rich domain"/>
    <property type="match status" value="1"/>
</dbReference>
<dbReference type="InterPro" id="IPR035091">
    <property type="entry name" value="Alpha_helix_dom_sf"/>
</dbReference>
<dbReference type="InterPro" id="IPR000500">
    <property type="entry name" value="Connexin"/>
</dbReference>
<dbReference type="InterPro" id="IPR002261">
    <property type="entry name" value="Connexin43"/>
</dbReference>
<dbReference type="InterPro" id="IPR013124">
    <property type="entry name" value="Connexin43_C"/>
</dbReference>
<dbReference type="InterPro" id="IPR034634">
    <property type="entry name" value="Connexin_C"/>
</dbReference>
<dbReference type="InterPro" id="IPR019570">
    <property type="entry name" value="Connexin_CCC"/>
</dbReference>
<dbReference type="InterPro" id="IPR017990">
    <property type="entry name" value="Connexin_CS"/>
</dbReference>
<dbReference type="InterPro" id="IPR013092">
    <property type="entry name" value="Connexin_N"/>
</dbReference>
<dbReference type="InterPro" id="IPR038359">
    <property type="entry name" value="Connexin_N_sf"/>
</dbReference>
<dbReference type="PANTHER" id="PTHR11984">
    <property type="entry name" value="CONNEXIN"/>
    <property type="match status" value="1"/>
</dbReference>
<dbReference type="PANTHER" id="PTHR11984:SF33">
    <property type="entry name" value="GAP JUNCTION ALPHA-1 PROTEIN"/>
    <property type="match status" value="1"/>
</dbReference>
<dbReference type="Pfam" id="PF00029">
    <property type="entry name" value="Connexin"/>
    <property type="match status" value="1"/>
</dbReference>
<dbReference type="Pfam" id="PF03508">
    <property type="entry name" value="Connexin43"/>
    <property type="match status" value="1"/>
</dbReference>
<dbReference type="PRINTS" id="PR00206">
    <property type="entry name" value="CONNEXIN"/>
</dbReference>
<dbReference type="PRINTS" id="PR01132">
    <property type="entry name" value="CONNEXINA1"/>
</dbReference>
<dbReference type="SMART" id="SM00037">
    <property type="entry name" value="CNX"/>
    <property type="match status" value="1"/>
</dbReference>
<dbReference type="SMART" id="SM01089">
    <property type="entry name" value="Connexin_CCC"/>
    <property type="match status" value="1"/>
</dbReference>
<dbReference type="SUPFAM" id="SSF118220">
    <property type="entry name" value="Connexin43"/>
    <property type="match status" value="1"/>
</dbReference>
<dbReference type="PROSITE" id="PS00407">
    <property type="entry name" value="CONNEXINS_1"/>
    <property type="match status" value="1"/>
</dbReference>
<dbReference type="PROSITE" id="PS00408">
    <property type="entry name" value="CONNEXINS_2"/>
    <property type="match status" value="1"/>
</dbReference>
<accession>P23242</accession>
<accession>Q544I7</accession>
<accession>Q8CE05</accession>
<keyword id="KW-0007">Acetylation</keyword>
<keyword id="KW-0965">Cell junction</keyword>
<keyword id="KW-1003">Cell membrane</keyword>
<keyword id="KW-1015">Disulfide bond</keyword>
<keyword id="KW-0256">Endoplasmic reticulum</keyword>
<keyword id="KW-0303">Gap junction</keyword>
<keyword id="KW-1017">Isopeptide bond</keyword>
<keyword id="KW-0472">Membrane</keyword>
<keyword id="KW-0597">Phosphoprotein</keyword>
<keyword id="KW-1185">Reference proteome</keyword>
<keyword id="KW-0702">S-nitrosylation</keyword>
<keyword id="KW-0812">Transmembrane</keyword>
<keyword id="KW-1133">Transmembrane helix</keyword>
<keyword id="KW-0832">Ubl conjugation</keyword>
<evidence type="ECO:0000250" key="1">
    <source>
        <dbReference type="UniProtKB" id="P08050"/>
    </source>
</evidence>
<evidence type="ECO:0000250" key="2">
    <source>
        <dbReference type="UniProtKB" id="P17302"/>
    </source>
</evidence>
<evidence type="ECO:0000250" key="3">
    <source>
        <dbReference type="UniProtKB" id="Q6TYA7"/>
    </source>
</evidence>
<evidence type="ECO:0000255" key="4"/>
<evidence type="ECO:0000256" key="5">
    <source>
        <dbReference type="SAM" id="MobiDB-lite"/>
    </source>
</evidence>
<evidence type="ECO:0000269" key="6">
    <source>
    </source>
</evidence>
<evidence type="ECO:0000269" key="7">
    <source>
    </source>
</evidence>
<evidence type="ECO:0000269" key="8">
    <source>
    </source>
</evidence>
<evidence type="ECO:0000269" key="9">
    <source>
    </source>
</evidence>
<evidence type="ECO:0000269" key="10">
    <source>
    </source>
</evidence>
<evidence type="ECO:0000269" key="11">
    <source>
    </source>
</evidence>
<evidence type="ECO:0000269" key="12">
    <source>
    </source>
</evidence>
<evidence type="ECO:0000269" key="13">
    <source>
    </source>
</evidence>
<evidence type="ECO:0000269" key="14">
    <source>
    </source>
</evidence>
<evidence type="ECO:0000269" key="15">
    <source>
    </source>
</evidence>
<evidence type="ECO:0000269" key="16">
    <source>
    </source>
</evidence>
<evidence type="ECO:0000269" key="17">
    <source>
    </source>
</evidence>
<evidence type="ECO:0000269" key="18">
    <source>
    </source>
</evidence>
<evidence type="ECO:0000305" key="19"/>
<evidence type="ECO:0007744" key="20">
    <source>
    </source>
</evidence>
<evidence type="ECO:0007744" key="21">
    <source>
    </source>
</evidence>
<reference key="1">
    <citation type="journal article" date="1991" name="J. Biol. Chem.">
        <title>Evidence that the gap junction protein connexin-43 is the ATP-induced pore of mouse macrophages.</title>
        <authorList>
            <person name="Beyer E.C."/>
            <person name="Steinberg T.H."/>
        </authorList>
    </citation>
    <scope>NUCLEOTIDE SEQUENCE [GENOMIC DNA]</scope>
</reference>
<reference key="2">
    <citation type="journal article" date="1991" name="Dev. Biol.">
        <title>Developmental regulation of gap junction gene expression during mouse embryonic development.</title>
        <authorList>
            <person name="Nishi M."/>
            <person name="Kumar N.M."/>
            <person name="Gilula N.B."/>
        </authorList>
    </citation>
    <scope>NUCLEOTIDE SEQUENCE [MRNA]</scope>
    <source>
        <strain>CD-1</strain>
        <tissue>Ovary</tissue>
    </source>
</reference>
<reference key="3">
    <citation type="journal article" date="1992" name="J. Cell Biol.">
        <title>Molecular cloning and functional expression of mouse connexin40, a second gap junction gene preferentially expressed in lung.</title>
        <authorList>
            <person name="Hennemann J."/>
            <person name="Suchyna T."/>
            <person name="Lichtenberg-Frate H."/>
            <person name="Jungbluth S."/>
            <person name="Dahl E."/>
            <person name="Schwarz J."/>
            <person name="Nicholson B.J."/>
            <person name="Willecke K."/>
        </authorList>
    </citation>
    <scope>NUCLEOTIDE SEQUENCE [GENOMIC DNA]</scope>
    <source>
        <strain>C57BL/6J</strain>
    </source>
</reference>
<reference key="4">
    <citation type="journal article" date="1993" name="Gene">
        <title>Structure, sequence and expression of the mouse Cx43 gene encoding connexin 43.</title>
        <authorList>
            <person name="Sullivan R."/>
            <person name="Ruangvoravat C."/>
            <person name="Joo D."/>
            <person name="Morgan J."/>
            <person name="Wang B.L."/>
            <person name="Wang X.K."/>
            <person name="Lo C.W."/>
        </authorList>
    </citation>
    <scope>NUCLEOTIDE SEQUENCE [MRNA]</scope>
    <scope>DEVELOPMENTAL STAGE</scope>
    <source>
        <tissue>Embryo</tissue>
    </source>
</reference>
<reference key="5">
    <citation type="journal article" date="2005" name="Science">
        <title>The transcriptional landscape of the mammalian genome.</title>
        <authorList>
            <person name="Carninci P."/>
            <person name="Kasukawa T."/>
            <person name="Katayama S."/>
            <person name="Gough J."/>
            <person name="Frith M.C."/>
            <person name="Maeda N."/>
            <person name="Oyama R."/>
            <person name="Ravasi T."/>
            <person name="Lenhard B."/>
            <person name="Wells C."/>
            <person name="Kodzius R."/>
            <person name="Shimokawa K."/>
            <person name="Bajic V.B."/>
            <person name="Brenner S.E."/>
            <person name="Batalov S."/>
            <person name="Forrest A.R."/>
            <person name="Zavolan M."/>
            <person name="Davis M.J."/>
            <person name="Wilming L.G."/>
            <person name="Aidinis V."/>
            <person name="Allen J.E."/>
            <person name="Ambesi-Impiombato A."/>
            <person name="Apweiler R."/>
            <person name="Aturaliya R.N."/>
            <person name="Bailey T.L."/>
            <person name="Bansal M."/>
            <person name="Baxter L."/>
            <person name="Beisel K.W."/>
            <person name="Bersano T."/>
            <person name="Bono H."/>
            <person name="Chalk A.M."/>
            <person name="Chiu K.P."/>
            <person name="Choudhary V."/>
            <person name="Christoffels A."/>
            <person name="Clutterbuck D.R."/>
            <person name="Crowe M.L."/>
            <person name="Dalla E."/>
            <person name="Dalrymple B.P."/>
            <person name="de Bono B."/>
            <person name="Della Gatta G."/>
            <person name="di Bernardo D."/>
            <person name="Down T."/>
            <person name="Engstrom P."/>
            <person name="Fagiolini M."/>
            <person name="Faulkner G."/>
            <person name="Fletcher C.F."/>
            <person name="Fukushima T."/>
            <person name="Furuno M."/>
            <person name="Futaki S."/>
            <person name="Gariboldi M."/>
            <person name="Georgii-Hemming P."/>
            <person name="Gingeras T.R."/>
            <person name="Gojobori T."/>
            <person name="Green R.E."/>
            <person name="Gustincich S."/>
            <person name="Harbers M."/>
            <person name="Hayashi Y."/>
            <person name="Hensch T.K."/>
            <person name="Hirokawa N."/>
            <person name="Hill D."/>
            <person name="Huminiecki L."/>
            <person name="Iacono M."/>
            <person name="Ikeo K."/>
            <person name="Iwama A."/>
            <person name="Ishikawa T."/>
            <person name="Jakt M."/>
            <person name="Kanapin A."/>
            <person name="Katoh M."/>
            <person name="Kawasawa Y."/>
            <person name="Kelso J."/>
            <person name="Kitamura H."/>
            <person name="Kitano H."/>
            <person name="Kollias G."/>
            <person name="Krishnan S.P."/>
            <person name="Kruger A."/>
            <person name="Kummerfeld S.K."/>
            <person name="Kurochkin I.V."/>
            <person name="Lareau L.F."/>
            <person name="Lazarevic D."/>
            <person name="Lipovich L."/>
            <person name="Liu J."/>
            <person name="Liuni S."/>
            <person name="McWilliam S."/>
            <person name="Madan Babu M."/>
            <person name="Madera M."/>
            <person name="Marchionni L."/>
            <person name="Matsuda H."/>
            <person name="Matsuzawa S."/>
            <person name="Miki H."/>
            <person name="Mignone F."/>
            <person name="Miyake S."/>
            <person name="Morris K."/>
            <person name="Mottagui-Tabar S."/>
            <person name="Mulder N."/>
            <person name="Nakano N."/>
            <person name="Nakauchi H."/>
            <person name="Ng P."/>
            <person name="Nilsson R."/>
            <person name="Nishiguchi S."/>
            <person name="Nishikawa S."/>
            <person name="Nori F."/>
            <person name="Ohara O."/>
            <person name="Okazaki Y."/>
            <person name="Orlando V."/>
            <person name="Pang K.C."/>
            <person name="Pavan W.J."/>
            <person name="Pavesi G."/>
            <person name="Pesole G."/>
            <person name="Petrovsky N."/>
            <person name="Piazza S."/>
            <person name="Reed J."/>
            <person name="Reid J.F."/>
            <person name="Ring B.Z."/>
            <person name="Ringwald M."/>
            <person name="Rost B."/>
            <person name="Ruan Y."/>
            <person name="Salzberg S.L."/>
            <person name="Sandelin A."/>
            <person name="Schneider C."/>
            <person name="Schoenbach C."/>
            <person name="Sekiguchi K."/>
            <person name="Semple C.A."/>
            <person name="Seno S."/>
            <person name="Sessa L."/>
            <person name="Sheng Y."/>
            <person name="Shibata Y."/>
            <person name="Shimada H."/>
            <person name="Shimada K."/>
            <person name="Silva D."/>
            <person name="Sinclair B."/>
            <person name="Sperling S."/>
            <person name="Stupka E."/>
            <person name="Sugiura K."/>
            <person name="Sultana R."/>
            <person name="Takenaka Y."/>
            <person name="Taki K."/>
            <person name="Tammoja K."/>
            <person name="Tan S.L."/>
            <person name="Tang S."/>
            <person name="Taylor M.S."/>
            <person name="Tegner J."/>
            <person name="Teichmann S.A."/>
            <person name="Ueda H.R."/>
            <person name="van Nimwegen E."/>
            <person name="Verardo R."/>
            <person name="Wei C.L."/>
            <person name="Yagi K."/>
            <person name="Yamanishi H."/>
            <person name="Zabarovsky E."/>
            <person name="Zhu S."/>
            <person name="Zimmer A."/>
            <person name="Hide W."/>
            <person name="Bult C."/>
            <person name="Grimmond S.M."/>
            <person name="Teasdale R.D."/>
            <person name="Liu E.T."/>
            <person name="Brusic V."/>
            <person name="Quackenbush J."/>
            <person name="Wahlestedt C."/>
            <person name="Mattick J.S."/>
            <person name="Hume D.A."/>
            <person name="Kai C."/>
            <person name="Sasaki D."/>
            <person name="Tomaru Y."/>
            <person name="Fukuda S."/>
            <person name="Kanamori-Katayama M."/>
            <person name="Suzuki M."/>
            <person name="Aoki J."/>
            <person name="Arakawa T."/>
            <person name="Iida J."/>
            <person name="Imamura K."/>
            <person name="Itoh M."/>
            <person name="Kato T."/>
            <person name="Kawaji H."/>
            <person name="Kawagashira N."/>
            <person name="Kawashima T."/>
            <person name="Kojima M."/>
            <person name="Kondo S."/>
            <person name="Konno H."/>
            <person name="Nakano K."/>
            <person name="Ninomiya N."/>
            <person name="Nishio T."/>
            <person name="Okada M."/>
            <person name="Plessy C."/>
            <person name="Shibata K."/>
            <person name="Shiraki T."/>
            <person name="Suzuki S."/>
            <person name="Tagami M."/>
            <person name="Waki K."/>
            <person name="Watahiki A."/>
            <person name="Okamura-Oho Y."/>
            <person name="Suzuki H."/>
            <person name="Kawai J."/>
            <person name="Hayashizaki Y."/>
        </authorList>
    </citation>
    <scope>NUCLEOTIDE SEQUENCE [LARGE SCALE MRNA]</scope>
    <source>
        <strain>C57BL/6J</strain>
        <tissue>Blastocyst</tissue>
        <tissue>Head</tissue>
        <tissue>Lung</tissue>
        <tissue>Vagina</tissue>
    </source>
</reference>
<reference key="6">
    <citation type="submission" date="2005-07" db="EMBL/GenBank/DDBJ databases">
        <title>Cloning of mouse full open reading frames in Gateway(R) system entry vector (pDONR201).</title>
        <authorList>
            <person name="Ebert L."/>
            <person name="Muenstermann E."/>
            <person name="Schatten R."/>
            <person name="Henze S."/>
            <person name="Bohn E."/>
            <person name="Mollenhauer J."/>
            <person name="Wiemann S."/>
            <person name="Schick M."/>
            <person name="Korn B."/>
        </authorList>
    </citation>
    <scope>NUCLEOTIDE SEQUENCE [LARGE SCALE MRNA]</scope>
</reference>
<reference key="7">
    <citation type="submission" date="2005-07" db="EMBL/GenBank/DDBJ databases">
        <authorList>
            <person name="Mural R.J."/>
            <person name="Adams M.D."/>
            <person name="Myers E.W."/>
            <person name="Smith H.O."/>
            <person name="Venter J.C."/>
        </authorList>
    </citation>
    <scope>NUCLEOTIDE SEQUENCE [LARGE SCALE GENOMIC DNA]</scope>
</reference>
<reference key="8">
    <citation type="journal article" date="2004" name="Genome Res.">
        <title>The status, quality, and expansion of the NIH full-length cDNA project: the Mammalian Gene Collection (MGC).</title>
        <authorList>
            <consortium name="The MGC Project Team"/>
        </authorList>
    </citation>
    <scope>NUCLEOTIDE SEQUENCE [LARGE SCALE MRNA]</scope>
    <source>
        <strain>FVB/N</strain>
        <tissue>Mammary gland</tissue>
    </source>
</reference>
<reference key="9">
    <citation type="journal article" date="1990" name="J. Mol. Cell. Cardiol.">
        <title>Changes in the expression of connexin 43, a cardiac gap junctional protein, during mouse heart development.</title>
        <authorList>
            <person name="Fromaget C."/>
            <person name="el Aoumari A."/>
            <person name="Dupont E."/>
            <person name="Briand J.-P."/>
            <person name="Gros D."/>
        </authorList>
    </citation>
    <scope>TISSUE SPECIFICITY</scope>
</reference>
<reference key="10">
    <citation type="journal article" date="2001" name="Hum. Mol. Genet.">
        <title>Mutations in GJA1 (connexin 43) are associated with non-syndromic autosomal recessive deafness.</title>
        <authorList>
            <person name="Liu X.Z."/>
            <person name="Xia X.J."/>
            <person name="Adams J."/>
            <person name="Chen Z.Y."/>
            <person name="Welch K.O."/>
            <person name="Tekin M."/>
            <person name="Ouyang X.M."/>
            <person name="Kristiansen A."/>
            <person name="Pandya A."/>
            <person name="Balkany T."/>
            <person name="Arnos K.S."/>
            <person name="Nance W.E."/>
        </authorList>
    </citation>
    <scope>TISSUE SPECIFICITY</scope>
</reference>
<reference key="11">
    <citation type="journal article" date="2004" name="J. Biol. Chem.">
        <title>Connexin43 interacts with NOV: a possible mechanism for negative regulation of cell growth in choriocarcinoma cells.</title>
        <authorList>
            <person name="Gellhaus A."/>
            <person name="Dong X."/>
            <person name="Propson S."/>
            <person name="Maass K."/>
            <person name="Klein-Hitpass L."/>
            <person name="Kibschull M."/>
            <person name="Traub O."/>
            <person name="Willecke K."/>
            <person name="Perbal B."/>
            <person name="Lye S.J."/>
            <person name="Winterhager E."/>
        </authorList>
    </citation>
    <scope>FUNCTION</scope>
</reference>
<reference key="12">
    <citation type="journal article" date="2004" name="J. Biol. Chem.">
        <title>CCN3 (NOV) interacts with connexin43 in C6 glioma cells: possible mechanism of connexin-mediated growth suppression.</title>
        <authorList>
            <person name="Fu C.T."/>
            <person name="Bechberger J.F."/>
            <person name="Ozog M.A."/>
            <person name="Perbal B."/>
            <person name="Naus C.C."/>
        </authorList>
    </citation>
    <scope>TISSUE SPECIFICITY</scope>
</reference>
<reference key="13">
    <citation type="journal article" date="2005" name="Biochemistry">
        <title>Novel rab GAP-like protein, CIP85, interacts with connexin43 and induces its degradation.</title>
        <authorList>
            <person name="Lan Z."/>
            <person name="Kurata W.E."/>
            <person name="Martyn K.D."/>
            <person name="Jin C."/>
            <person name="Lau A.F."/>
        </authorList>
    </citation>
    <scope>INTERACTION WITH SGSM3</scope>
</reference>
<reference key="14">
    <citation type="journal article" date="2007" name="Mol. Cell. Proteomics">
        <title>Qualitative and quantitative analyses of protein phosphorylation in naive and stimulated mouse synaptosomal preparations.</title>
        <authorList>
            <person name="Munton R.P."/>
            <person name="Tweedie-Cullen R."/>
            <person name="Livingstone-Zatchej M."/>
            <person name="Weinandy F."/>
            <person name="Waidelich M."/>
            <person name="Longo D."/>
            <person name="Gehrig P."/>
            <person name="Potthast F."/>
            <person name="Rutishauser D."/>
            <person name="Gerrits B."/>
            <person name="Panse C."/>
            <person name="Schlapbach R."/>
            <person name="Mansuy I.M."/>
        </authorList>
    </citation>
    <scope>IDENTIFICATION BY MASS SPECTROMETRY [LARGE SCALE ANALYSIS]</scope>
    <source>
        <tissue>Brain cortex</tissue>
    </source>
</reference>
<reference key="15">
    <citation type="journal article" date="2008" name="J. Biol. Chem.">
        <title>A novel connexin43-interacting protein, CIP75, which belongs to the UbL-UBA protein family, regulates the turnover of connexin43.</title>
        <authorList>
            <person name="Li X."/>
            <person name="Su V."/>
            <person name="Kurata W.E."/>
            <person name="Jin C."/>
            <person name="Lau A.F."/>
        </authorList>
    </citation>
    <scope>SUBCELLULAR LOCATION</scope>
    <scope>INTERACTION WITH UBQLN4</scope>
</reference>
<reference key="16">
    <citation type="journal article" date="2008" name="J. Proteome Res.">
        <title>Large-scale identification and evolution indexing of tyrosine phosphorylation sites from murine brain.</title>
        <authorList>
            <person name="Ballif B.A."/>
            <person name="Carey G.R."/>
            <person name="Sunyaev S.R."/>
            <person name="Gygi S.P."/>
        </authorList>
    </citation>
    <scope>PHOSPHORYLATION [LARGE SCALE ANALYSIS] AT TYR-247</scope>
    <scope>IDENTIFICATION BY MASS SPECTROMETRY [LARGE SCALE ANALYSIS]</scope>
    <source>
        <tissue>Brain</tissue>
    </source>
</reference>
<reference key="17">
    <citation type="journal article" date="2010" name="Cell">
        <title>A tissue-specific atlas of mouse protein phosphorylation and expression.</title>
        <authorList>
            <person name="Huttlin E.L."/>
            <person name="Jedrychowski M.P."/>
            <person name="Elias J.E."/>
            <person name="Goswami T."/>
            <person name="Rad R."/>
            <person name="Beausoleil S.A."/>
            <person name="Villen J."/>
            <person name="Haas W."/>
            <person name="Sowa M.E."/>
            <person name="Gygi S.P."/>
        </authorList>
    </citation>
    <scope>PHOSPHORYLATION [LARGE SCALE ANALYSIS] AT THR-275; SER-306; SER-314; SER-325; THR-326; SER-328; SER-330; SER-341; SER-365; SER-368 AND SER-369</scope>
    <scope>IDENTIFICATION BY MASS SPECTROMETRY [LARGE SCALE ANALYSIS]</scope>
    <source>
        <tissue>Brain</tissue>
        <tissue>Brown adipose tissue</tissue>
        <tissue>Heart</tissue>
        <tissue>Lung</tissue>
        <tissue>Testis</tissue>
    </source>
</reference>
<reference key="18">
    <citation type="journal article" date="2010" name="Hum. Mol. Genet.">
        <title>Consortin, a trans-Golgi network cargo receptor for the plasma membrane targeting and recycling of connexins.</title>
        <authorList>
            <person name="del Castillo F.J."/>
            <person name="Cohen-Salmon M."/>
            <person name="Charollais A."/>
            <person name="Caille D."/>
            <person name="Lampe P.D."/>
            <person name="Chavrier P."/>
            <person name="Meda P."/>
            <person name="Petit C."/>
        </authorList>
    </citation>
    <scope>INTERACTION WITH CNST</scope>
</reference>
<reference key="19">
    <citation type="journal article" date="2010" name="J. Biol. Chem.">
        <title>Ubiquitin-independent proteasomal degradation of endoplasmic reticulum-localized connexin43 mediated by CIP75.</title>
        <authorList>
            <person name="Su V."/>
            <person name="Nakagawa R."/>
            <person name="Koval M."/>
            <person name="Lau A.F."/>
        </authorList>
    </citation>
    <scope>SUBCELLULAR LOCATION</scope>
    <scope>INTERACTION WITH UBQLN4</scope>
</reference>
<reference key="20">
    <citation type="journal article" date="2011" name="Arterioscler. Thromb. Vasc. Biol.">
        <title>Compartmentalized connexin 43 s-nitrosylation/denitrosylation regulates heterocellular communication in the vessel wall.</title>
        <authorList>
            <person name="Straub A.C."/>
            <person name="Billaud M."/>
            <person name="Johnstone S.R."/>
            <person name="Best A.K."/>
            <person name="Yemen S."/>
            <person name="Dwyer S.T."/>
            <person name="Looft-Wilson R."/>
            <person name="Lysiak J.J."/>
            <person name="Gaston B."/>
            <person name="Palmer L."/>
            <person name="Isakson B.E."/>
        </authorList>
    </citation>
    <scope>S-NITROSYLATION AT CYS-271</scope>
</reference>
<reference key="21">
    <citation type="journal article" date="2012" name="Nat. Commun.">
        <title>Involvement of urinary bladder Connexin43 and the circadian clock in coordination of diurnal micturition rhythm.</title>
        <authorList>
            <person name="Negoro H."/>
            <person name="Kanematsu A."/>
            <person name="Doi M."/>
            <person name="Suadicani S.O."/>
            <person name="Matsuo M."/>
            <person name="Imamura M."/>
            <person name="Okinami T."/>
            <person name="Nishikawa N."/>
            <person name="Oura T."/>
            <person name="Matsui S."/>
            <person name="Seo K."/>
            <person name="Tainaka M."/>
            <person name="Urabe S."/>
            <person name="Kiyokage E."/>
            <person name="Todo T."/>
            <person name="Okamura H."/>
            <person name="Tabata Y."/>
            <person name="Ogawa O."/>
        </authorList>
    </citation>
    <scope>FUNCTION</scope>
    <scope>INDUCTION</scope>
    <scope>TISSUE SPECIFICITY</scope>
    <scope>DISRUPTION PHENOTYPE</scope>
</reference>
<reference key="22">
    <citation type="journal article" date="2015" name="Nat. Commun.">
        <title>Evolutionarily conserved intercalated disc protein Tmem65 regulates cardiac conduction and connexin 43 function.</title>
        <authorList>
            <person name="Sharma P."/>
            <person name="Abbasi C."/>
            <person name="Lazic S."/>
            <person name="Teng A.C."/>
            <person name="Wang D."/>
            <person name="Dubois N."/>
            <person name="Ignatchenko V."/>
            <person name="Wong V."/>
            <person name="Liu J."/>
            <person name="Araki T."/>
            <person name="Tiburcy M."/>
            <person name="Ackerley C."/>
            <person name="Zimmermann W.H."/>
            <person name="Hamilton R."/>
            <person name="Sun Y."/>
            <person name="Liu P.P."/>
            <person name="Keller G."/>
            <person name="Stagljar I."/>
            <person name="Scott I.C."/>
            <person name="Kislinger T."/>
            <person name="Gramolini A.O."/>
        </authorList>
    </citation>
    <scope>FUNCTION</scope>
    <scope>SUBCELLULAR LOCATION</scope>
    <scope>PHOSPHORYLATION AT SER-368</scope>
    <scope>INTERACTION WITH TMEM65</scope>
</reference>
<reference key="23">
    <citation type="journal article" date="2017" name="Front. Cell. Neurosci.">
        <title>Loss of Elp3 impairs the acetylation and distribution of connexin-43 in the developing cerebral cortex.</title>
        <authorList>
            <person name="Laguesse S."/>
            <person name="Close P."/>
            <person name="Van Hees L."/>
            <person name="Chariot A."/>
            <person name="Malgrange B."/>
            <person name="Nguyen L."/>
        </authorList>
    </citation>
    <scope>ACETYLATION</scope>
    <scope>SUBCELLULAR LOCATION</scope>
</reference>
<organism>
    <name type="scientific">Mus musculus</name>
    <name type="common">Mouse</name>
    <dbReference type="NCBI Taxonomy" id="10090"/>
    <lineage>
        <taxon>Eukaryota</taxon>
        <taxon>Metazoa</taxon>
        <taxon>Chordata</taxon>
        <taxon>Craniata</taxon>
        <taxon>Vertebrata</taxon>
        <taxon>Euteleostomi</taxon>
        <taxon>Mammalia</taxon>
        <taxon>Eutheria</taxon>
        <taxon>Euarchontoglires</taxon>
        <taxon>Glires</taxon>
        <taxon>Rodentia</taxon>
        <taxon>Myomorpha</taxon>
        <taxon>Muroidea</taxon>
        <taxon>Muridae</taxon>
        <taxon>Murinae</taxon>
        <taxon>Mus</taxon>
        <taxon>Mus</taxon>
    </lineage>
</organism>